<protein>
    <recommendedName>
        <fullName evidence="1">NAD(P)H-quinone oxidoreductase subunit I, chloroplastic</fullName>
        <ecNumber evidence="1">7.1.1.-</ecNumber>
    </recommendedName>
    <alternativeName>
        <fullName evidence="1">NAD(P)H dehydrogenase subunit I</fullName>
        <shortName evidence="1">NDH subunit I</shortName>
    </alternativeName>
    <alternativeName>
        <fullName evidence="1">NADH-plastoquinone oxidoreductase subunit I</fullName>
    </alternativeName>
</protein>
<proteinExistence type="inferred from homology"/>
<keyword id="KW-0004">4Fe-4S</keyword>
<keyword id="KW-0150">Chloroplast</keyword>
<keyword id="KW-0408">Iron</keyword>
<keyword id="KW-0411">Iron-sulfur</keyword>
<keyword id="KW-0472">Membrane</keyword>
<keyword id="KW-0479">Metal-binding</keyword>
<keyword id="KW-0520">NAD</keyword>
<keyword id="KW-0521">NADP</keyword>
<keyword id="KW-0934">Plastid</keyword>
<keyword id="KW-0618">Plastoquinone</keyword>
<keyword id="KW-0874">Quinone</keyword>
<keyword id="KW-0677">Repeat</keyword>
<keyword id="KW-0793">Thylakoid</keyword>
<keyword id="KW-1278">Translocase</keyword>
<evidence type="ECO:0000255" key="1">
    <source>
        <dbReference type="HAMAP-Rule" id="MF_01351"/>
    </source>
</evidence>
<geneLocation type="chloroplast"/>
<gene>
    <name evidence="1" type="primary">ndhI</name>
</gene>
<reference key="1">
    <citation type="submission" date="2003-01" db="EMBL/GenBank/DDBJ databases">
        <title>Chloroplast DNA phylogeny of tribe Heliantheae (Asteraceae).</title>
        <authorList>
            <person name="Panero J.L."/>
            <person name="Baldwin B.G."/>
            <person name="Schilling E.E."/>
            <person name="Clevinger J.A."/>
        </authorList>
    </citation>
    <scope>NUCLEOTIDE SEQUENCE [GENOMIC DNA]</scope>
</reference>
<organism>
    <name type="scientific">Lasianthaea macrocephala</name>
    <name type="common">Lipochaeta macrocephala</name>
    <dbReference type="NCBI Taxonomy" id="183039"/>
    <lineage>
        <taxon>Eukaryota</taxon>
        <taxon>Viridiplantae</taxon>
        <taxon>Streptophyta</taxon>
        <taxon>Embryophyta</taxon>
        <taxon>Tracheophyta</taxon>
        <taxon>Spermatophyta</taxon>
        <taxon>Magnoliopsida</taxon>
        <taxon>eudicotyledons</taxon>
        <taxon>Gunneridae</taxon>
        <taxon>Pentapetalae</taxon>
        <taxon>asterids</taxon>
        <taxon>campanulids</taxon>
        <taxon>Asterales</taxon>
        <taxon>Asteraceae</taxon>
        <taxon>Asteroideae</taxon>
        <taxon>Heliantheae alliance</taxon>
        <taxon>Heliantheae</taxon>
        <taxon>Lasianthaea</taxon>
    </lineage>
</organism>
<accession>Q8HVQ5</accession>
<comment type="function">
    <text evidence="1">NDH shuttles electrons from NAD(P)H:plastoquinone, via FMN and iron-sulfur (Fe-S) centers, to quinones in the photosynthetic chain and possibly in a chloroplast respiratory chain. The immediate electron acceptor for the enzyme in this species is believed to be plastoquinone. Couples the redox reaction to proton translocation, and thus conserves the redox energy in a proton gradient.</text>
</comment>
<comment type="catalytic activity">
    <reaction evidence="1">
        <text>a plastoquinone + NADH + (n+1) H(+)(in) = a plastoquinol + NAD(+) + n H(+)(out)</text>
        <dbReference type="Rhea" id="RHEA:42608"/>
        <dbReference type="Rhea" id="RHEA-COMP:9561"/>
        <dbReference type="Rhea" id="RHEA-COMP:9562"/>
        <dbReference type="ChEBI" id="CHEBI:15378"/>
        <dbReference type="ChEBI" id="CHEBI:17757"/>
        <dbReference type="ChEBI" id="CHEBI:57540"/>
        <dbReference type="ChEBI" id="CHEBI:57945"/>
        <dbReference type="ChEBI" id="CHEBI:62192"/>
    </reaction>
</comment>
<comment type="catalytic activity">
    <reaction evidence="1">
        <text>a plastoquinone + NADPH + (n+1) H(+)(in) = a plastoquinol + NADP(+) + n H(+)(out)</text>
        <dbReference type="Rhea" id="RHEA:42612"/>
        <dbReference type="Rhea" id="RHEA-COMP:9561"/>
        <dbReference type="Rhea" id="RHEA-COMP:9562"/>
        <dbReference type="ChEBI" id="CHEBI:15378"/>
        <dbReference type="ChEBI" id="CHEBI:17757"/>
        <dbReference type="ChEBI" id="CHEBI:57783"/>
        <dbReference type="ChEBI" id="CHEBI:58349"/>
        <dbReference type="ChEBI" id="CHEBI:62192"/>
    </reaction>
</comment>
<comment type="cofactor">
    <cofactor evidence="1">
        <name>[4Fe-4S] cluster</name>
        <dbReference type="ChEBI" id="CHEBI:49883"/>
    </cofactor>
    <text evidence="1">Binds 2 [4Fe-4S] clusters per subunit.</text>
</comment>
<comment type="subunit">
    <text evidence="1">NDH is composed of at least 16 different subunits, 5 of which are encoded in the nucleus.</text>
</comment>
<comment type="subcellular location">
    <subcellularLocation>
        <location evidence="1">Plastid</location>
        <location evidence="1">Chloroplast thylakoid membrane</location>
        <topology evidence="1">Peripheral membrane protein</topology>
    </subcellularLocation>
</comment>
<comment type="similarity">
    <text evidence="1">Belongs to the complex I 23 kDa subunit family.</text>
</comment>
<feature type="chain" id="PRO_0000250808" description="NAD(P)H-quinone oxidoreductase subunit I, chloroplastic">
    <location>
        <begin position="1"/>
        <end position="166"/>
    </location>
</feature>
<feature type="domain" description="4Fe-4S ferredoxin-type 1" evidence="1">
    <location>
        <begin position="55"/>
        <end position="84"/>
    </location>
</feature>
<feature type="domain" description="4Fe-4S ferredoxin-type 2" evidence="1">
    <location>
        <begin position="95"/>
        <end position="124"/>
    </location>
</feature>
<feature type="binding site" evidence="1">
    <location>
        <position position="64"/>
    </location>
    <ligand>
        <name>[4Fe-4S] cluster</name>
        <dbReference type="ChEBI" id="CHEBI:49883"/>
        <label>1</label>
    </ligand>
</feature>
<feature type="binding site" evidence="1">
    <location>
        <position position="67"/>
    </location>
    <ligand>
        <name>[4Fe-4S] cluster</name>
        <dbReference type="ChEBI" id="CHEBI:49883"/>
        <label>1</label>
    </ligand>
</feature>
<feature type="binding site" evidence="1">
    <location>
        <position position="70"/>
    </location>
    <ligand>
        <name>[4Fe-4S] cluster</name>
        <dbReference type="ChEBI" id="CHEBI:49883"/>
        <label>1</label>
    </ligand>
</feature>
<feature type="binding site" evidence="1">
    <location>
        <position position="74"/>
    </location>
    <ligand>
        <name>[4Fe-4S] cluster</name>
        <dbReference type="ChEBI" id="CHEBI:49883"/>
        <label>2</label>
    </ligand>
</feature>
<feature type="binding site" evidence="1">
    <location>
        <position position="104"/>
    </location>
    <ligand>
        <name>[4Fe-4S] cluster</name>
        <dbReference type="ChEBI" id="CHEBI:49883"/>
        <label>2</label>
    </ligand>
</feature>
<feature type="binding site" evidence="1">
    <location>
        <position position="107"/>
    </location>
    <ligand>
        <name>[4Fe-4S] cluster</name>
        <dbReference type="ChEBI" id="CHEBI:49883"/>
        <label>2</label>
    </ligand>
</feature>
<feature type="binding site" evidence="1">
    <location>
        <position position="110"/>
    </location>
    <ligand>
        <name>[4Fe-4S] cluster</name>
        <dbReference type="ChEBI" id="CHEBI:49883"/>
        <label>2</label>
    </ligand>
</feature>
<feature type="binding site" evidence="1">
    <location>
        <position position="114"/>
    </location>
    <ligand>
        <name>[4Fe-4S] cluster</name>
        <dbReference type="ChEBI" id="CHEBI:49883"/>
        <label>1</label>
    </ligand>
</feature>
<sequence>MFPMVTEFMNYGQQTVRAARYIGQGFMITLSHANRLPVTIQYPYEKLITSERFRGRIHFEFDKCIACEVCVRVCPIDLPVVDWKLETDIRKKRLLNYSIDFGICIFCGNCVEYCPTNCLSMTEEYELSTYDRHELNYNQIALGRLPMSIIDDYTIRTILNLPEIKN</sequence>
<name>NDHI_LASMA</name>
<dbReference type="EC" id="7.1.1.-" evidence="1"/>
<dbReference type="EMBL" id="AF383808">
    <property type="protein sequence ID" value="AAN61749.1"/>
    <property type="molecule type" value="Genomic_DNA"/>
</dbReference>
<dbReference type="SMR" id="Q8HVQ5"/>
<dbReference type="GO" id="GO:0009535">
    <property type="term" value="C:chloroplast thylakoid membrane"/>
    <property type="evidence" value="ECO:0007669"/>
    <property type="project" value="UniProtKB-SubCell"/>
</dbReference>
<dbReference type="GO" id="GO:0051539">
    <property type="term" value="F:4 iron, 4 sulfur cluster binding"/>
    <property type="evidence" value="ECO:0007669"/>
    <property type="project" value="UniProtKB-KW"/>
</dbReference>
<dbReference type="GO" id="GO:0005506">
    <property type="term" value="F:iron ion binding"/>
    <property type="evidence" value="ECO:0007669"/>
    <property type="project" value="UniProtKB-UniRule"/>
</dbReference>
<dbReference type="GO" id="GO:0008137">
    <property type="term" value="F:NADH dehydrogenase (ubiquinone) activity"/>
    <property type="evidence" value="ECO:0007669"/>
    <property type="project" value="InterPro"/>
</dbReference>
<dbReference type="GO" id="GO:0048038">
    <property type="term" value="F:quinone binding"/>
    <property type="evidence" value="ECO:0007669"/>
    <property type="project" value="UniProtKB-KW"/>
</dbReference>
<dbReference type="GO" id="GO:0019684">
    <property type="term" value="P:photosynthesis, light reaction"/>
    <property type="evidence" value="ECO:0007669"/>
    <property type="project" value="UniProtKB-UniRule"/>
</dbReference>
<dbReference type="FunFam" id="3.30.70.3270:FF:000006">
    <property type="entry name" value="NAD(P)H-quinone oxidoreductase subunit I, chloroplastic"/>
    <property type="match status" value="1"/>
</dbReference>
<dbReference type="Gene3D" id="3.30.70.3270">
    <property type="match status" value="1"/>
</dbReference>
<dbReference type="HAMAP" id="MF_01351">
    <property type="entry name" value="NDH1_NuoI"/>
    <property type="match status" value="1"/>
</dbReference>
<dbReference type="InterPro" id="IPR017896">
    <property type="entry name" value="4Fe4S_Fe-S-bd"/>
</dbReference>
<dbReference type="InterPro" id="IPR017900">
    <property type="entry name" value="4Fe4S_Fe_S_CS"/>
</dbReference>
<dbReference type="InterPro" id="IPR010226">
    <property type="entry name" value="NADH_quinone_OxRdtase_chainI"/>
</dbReference>
<dbReference type="InterPro" id="IPR004497">
    <property type="entry name" value="NDHI"/>
</dbReference>
<dbReference type="NCBIfam" id="TIGR00403">
    <property type="entry name" value="ndhI"/>
    <property type="match status" value="1"/>
</dbReference>
<dbReference type="NCBIfam" id="TIGR01971">
    <property type="entry name" value="NuoI"/>
    <property type="match status" value="1"/>
</dbReference>
<dbReference type="NCBIfam" id="NF004537">
    <property type="entry name" value="PRK05888.1-3"/>
    <property type="match status" value="1"/>
</dbReference>
<dbReference type="PANTHER" id="PTHR47275">
    <property type="entry name" value="NAD(P)H-QUINONE OXIDOREDUCTASE SUBUNIT I, CHLOROPLASTIC"/>
    <property type="match status" value="1"/>
</dbReference>
<dbReference type="PANTHER" id="PTHR47275:SF1">
    <property type="entry name" value="NAD(P)H-QUINONE OXIDOREDUCTASE SUBUNIT I, CHLOROPLASTIC"/>
    <property type="match status" value="1"/>
</dbReference>
<dbReference type="Pfam" id="PF00037">
    <property type="entry name" value="Fer4"/>
    <property type="match status" value="2"/>
</dbReference>
<dbReference type="SUPFAM" id="SSF54862">
    <property type="entry name" value="4Fe-4S ferredoxins"/>
    <property type="match status" value="1"/>
</dbReference>
<dbReference type="PROSITE" id="PS00198">
    <property type="entry name" value="4FE4S_FER_1"/>
    <property type="match status" value="2"/>
</dbReference>
<dbReference type="PROSITE" id="PS51379">
    <property type="entry name" value="4FE4S_FER_2"/>
    <property type="match status" value="2"/>
</dbReference>